<organism>
    <name type="scientific">Afipia carboxidovorans (strain ATCC 49405 / DSM 1227 / KCTC 32145 / OM5)</name>
    <name type="common">Oligotropha carboxidovorans</name>
    <dbReference type="NCBI Taxonomy" id="504832"/>
    <lineage>
        <taxon>Bacteria</taxon>
        <taxon>Pseudomonadati</taxon>
        <taxon>Pseudomonadota</taxon>
        <taxon>Alphaproteobacteria</taxon>
        <taxon>Hyphomicrobiales</taxon>
        <taxon>Nitrobacteraceae</taxon>
        <taxon>Afipia</taxon>
    </lineage>
</organism>
<keyword id="KW-0028">Amino-acid biosynthesis</keyword>
<keyword id="KW-0055">Arginine biosynthesis</keyword>
<keyword id="KW-0067">ATP-binding</keyword>
<keyword id="KW-0963">Cytoplasm</keyword>
<keyword id="KW-0418">Kinase</keyword>
<keyword id="KW-0547">Nucleotide-binding</keyword>
<keyword id="KW-1185">Reference proteome</keyword>
<keyword id="KW-0808">Transferase</keyword>
<comment type="function">
    <text evidence="1">Catalyzes the ATP-dependent phosphorylation of N-acetyl-L-glutamate.</text>
</comment>
<comment type="catalytic activity">
    <reaction evidence="1">
        <text>N-acetyl-L-glutamate + ATP = N-acetyl-L-glutamyl 5-phosphate + ADP</text>
        <dbReference type="Rhea" id="RHEA:14629"/>
        <dbReference type="ChEBI" id="CHEBI:30616"/>
        <dbReference type="ChEBI" id="CHEBI:44337"/>
        <dbReference type="ChEBI" id="CHEBI:57936"/>
        <dbReference type="ChEBI" id="CHEBI:456216"/>
        <dbReference type="EC" id="2.7.2.8"/>
    </reaction>
</comment>
<comment type="pathway">
    <text evidence="1">Amino-acid biosynthesis; L-arginine biosynthesis; N(2)-acetyl-L-ornithine from L-glutamate: step 2/4.</text>
</comment>
<comment type="subcellular location">
    <subcellularLocation>
        <location evidence="1">Cytoplasm</location>
    </subcellularLocation>
</comment>
<comment type="similarity">
    <text evidence="1">Belongs to the acetylglutamate kinase family. ArgB subfamily.</text>
</comment>
<reference key="1">
    <citation type="journal article" date="2008" name="J. Bacteriol.">
        <title>Genome sequence of the chemolithoautotrophic bacterium Oligotropha carboxidovorans OM5T.</title>
        <authorList>
            <person name="Paul D."/>
            <person name="Bridges S."/>
            <person name="Burgess S.C."/>
            <person name="Dandass Y."/>
            <person name="Lawrence M.L."/>
        </authorList>
    </citation>
    <scope>NUCLEOTIDE SEQUENCE [LARGE SCALE GENOMIC DNA]</scope>
    <source>
        <strain>ATCC 49405 / DSM 1227 / KCTC 32145 / OM5</strain>
    </source>
</reference>
<reference key="2">
    <citation type="journal article" date="2011" name="J. Bacteriol.">
        <title>Complete genome sequences of the chemolithoautotrophic Oligotropha carboxidovorans strains OM4 and OM5.</title>
        <authorList>
            <person name="Volland S."/>
            <person name="Rachinger M."/>
            <person name="Strittmatter A."/>
            <person name="Daniel R."/>
            <person name="Gottschalk G."/>
            <person name="Meyer O."/>
        </authorList>
    </citation>
    <scope>NUCLEOTIDE SEQUENCE [LARGE SCALE GENOMIC DNA]</scope>
    <source>
        <strain>ATCC 49405 / DSM 1227 / KCTC 32145 / OM5</strain>
    </source>
</reference>
<accession>B6JJP1</accession>
<accession>F8BWX9</accession>
<evidence type="ECO:0000255" key="1">
    <source>
        <dbReference type="HAMAP-Rule" id="MF_00082"/>
    </source>
</evidence>
<dbReference type="EC" id="2.7.2.8" evidence="1"/>
<dbReference type="EMBL" id="CP001196">
    <property type="protein sequence ID" value="ACI94635.1"/>
    <property type="molecule type" value="Genomic_DNA"/>
</dbReference>
<dbReference type="EMBL" id="CP002826">
    <property type="protein sequence ID" value="AEI05331.1"/>
    <property type="molecule type" value="Genomic_DNA"/>
</dbReference>
<dbReference type="RefSeq" id="WP_012564659.1">
    <property type="nucleotide sequence ID" value="NC_015684.1"/>
</dbReference>
<dbReference type="SMR" id="B6JJP1"/>
<dbReference type="STRING" id="504832.OCA5_c06070"/>
<dbReference type="KEGG" id="oca:OCAR_7533"/>
<dbReference type="KEGG" id="ocg:OCA5_c06070"/>
<dbReference type="PATRIC" id="fig|504832.7.peg.635"/>
<dbReference type="eggNOG" id="COG0548">
    <property type="taxonomic scope" value="Bacteria"/>
</dbReference>
<dbReference type="HOGENOM" id="CLU_053680_0_0_5"/>
<dbReference type="OrthoDB" id="9803155at2"/>
<dbReference type="UniPathway" id="UPA00068">
    <property type="reaction ID" value="UER00107"/>
</dbReference>
<dbReference type="Proteomes" id="UP000007730">
    <property type="component" value="Chromosome"/>
</dbReference>
<dbReference type="GO" id="GO:0005737">
    <property type="term" value="C:cytoplasm"/>
    <property type="evidence" value="ECO:0007669"/>
    <property type="project" value="UniProtKB-SubCell"/>
</dbReference>
<dbReference type="GO" id="GO:0003991">
    <property type="term" value="F:acetylglutamate kinase activity"/>
    <property type="evidence" value="ECO:0007669"/>
    <property type="project" value="UniProtKB-UniRule"/>
</dbReference>
<dbReference type="GO" id="GO:0005524">
    <property type="term" value="F:ATP binding"/>
    <property type="evidence" value="ECO:0007669"/>
    <property type="project" value="UniProtKB-UniRule"/>
</dbReference>
<dbReference type="GO" id="GO:0042450">
    <property type="term" value="P:arginine biosynthetic process via ornithine"/>
    <property type="evidence" value="ECO:0007669"/>
    <property type="project" value="UniProtKB-UniRule"/>
</dbReference>
<dbReference type="GO" id="GO:0006526">
    <property type="term" value="P:L-arginine biosynthetic process"/>
    <property type="evidence" value="ECO:0007669"/>
    <property type="project" value="UniProtKB-UniPathway"/>
</dbReference>
<dbReference type="CDD" id="cd04250">
    <property type="entry name" value="AAK_NAGK-C"/>
    <property type="match status" value="1"/>
</dbReference>
<dbReference type="FunFam" id="3.40.1160.10:FF:000004">
    <property type="entry name" value="Acetylglutamate kinase"/>
    <property type="match status" value="1"/>
</dbReference>
<dbReference type="Gene3D" id="3.40.1160.10">
    <property type="entry name" value="Acetylglutamate kinase-like"/>
    <property type="match status" value="1"/>
</dbReference>
<dbReference type="HAMAP" id="MF_00082">
    <property type="entry name" value="ArgB"/>
    <property type="match status" value="1"/>
</dbReference>
<dbReference type="InterPro" id="IPR036393">
    <property type="entry name" value="AceGlu_kinase-like_sf"/>
</dbReference>
<dbReference type="InterPro" id="IPR004662">
    <property type="entry name" value="AcgluKinase_fam"/>
</dbReference>
<dbReference type="InterPro" id="IPR037528">
    <property type="entry name" value="ArgB"/>
</dbReference>
<dbReference type="InterPro" id="IPR001048">
    <property type="entry name" value="Asp/Glu/Uridylate_kinase"/>
</dbReference>
<dbReference type="InterPro" id="IPR041727">
    <property type="entry name" value="NAGK-C"/>
</dbReference>
<dbReference type="NCBIfam" id="TIGR00761">
    <property type="entry name" value="argB"/>
    <property type="match status" value="1"/>
</dbReference>
<dbReference type="PANTHER" id="PTHR23342">
    <property type="entry name" value="N-ACETYLGLUTAMATE SYNTHASE"/>
    <property type="match status" value="1"/>
</dbReference>
<dbReference type="PANTHER" id="PTHR23342:SF0">
    <property type="entry name" value="N-ACETYLGLUTAMATE SYNTHASE, MITOCHONDRIAL"/>
    <property type="match status" value="1"/>
</dbReference>
<dbReference type="Pfam" id="PF00696">
    <property type="entry name" value="AA_kinase"/>
    <property type="match status" value="1"/>
</dbReference>
<dbReference type="PIRSF" id="PIRSF000728">
    <property type="entry name" value="NAGK"/>
    <property type="match status" value="1"/>
</dbReference>
<dbReference type="SUPFAM" id="SSF53633">
    <property type="entry name" value="Carbamate kinase-like"/>
    <property type="match status" value="1"/>
</dbReference>
<proteinExistence type="inferred from homology"/>
<name>ARGB_AFIC5</name>
<sequence>MSDISPQDQARILSEALPHMQQYDEETIVIKYGGHAMGEEHLAREFARDIVLLEQTAINPVVVHGGGPQIATMLGRLGIKSEFAAGLRITDASAIEIVEMVLAGSINKQIVSHINAAGGKAVGLSGKDGNMVTAVKATRTMIDPDSNIEKVIDLGFVGEPDKVDLALLNQLIGHELIPVLAPLAVSTDGQTYNVNADTFAGAVAGALRAKRLLLLTDVAGVLDKSKKLIPELSIKDARRLIADGTISGGMIPKVETCIYALEAGVEGVVILDGKTPHAVLLELFTNQGTGTLIYK</sequence>
<feature type="chain" id="PRO_1000092869" description="Acetylglutamate kinase">
    <location>
        <begin position="1"/>
        <end position="295"/>
    </location>
</feature>
<feature type="binding site" evidence="1">
    <location>
        <begin position="66"/>
        <end position="67"/>
    </location>
    <ligand>
        <name>substrate</name>
    </ligand>
</feature>
<feature type="binding site" evidence="1">
    <location>
        <position position="88"/>
    </location>
    <ligand>
        <name>substrate</name>
    </ligand>
</feature>
<feature type="binding site" evidence="1">
    <location>
        <position position="193"/>
    </location>
    <ligand>
        <name>substrate</name>
    </ligand>
</feature>
<feature type="site" description="Transition state stabilizer" evidence="1">
    <location>
        <position position="31"/>
    </location>
</feature>
<feature type="site" description="Transition state stabilizer" evidence="1">
    <location>
        <position position="253"/>
    </location>
</feature>
<protein>
    <recommendedName>
        <fullName evidence="1">Acetylglutamate kinase</fullName>
        <ecNumber evidence="1">2.7.2.8</ecNumber>
    </recommendedName>
    <alternativeName>
        <fullName evidence="1">N-acetyl-L-glutamate 5-phosphotransferase</fullName>
    </alternativeName>
    <alternativeName>
        <fullName evidence="1">NAG kinase</fullName>
        <shortName evidence="1">NAGK</shortName>
    </alternativeName>
</protein>
<gene>
    <name evidence="1" type="primary">argB</name>
    <name type="ordered locus">OCAR_7533</name>
    <name type="ordered locus">OCA5_c06070</name>
</gene>